<protein>
    <recommendedName>
        <fullName evidence="1">Dihydroxy-acid dehydratase</fullName>
        <shortName evidence="1">DAD</shortName>
        <ecNumber evidence="1">4.2.1.9</ecNumber>
    </recommendedName>
</protein>
<keyword id="KW-0001">2Fe-2S</keyword>
<keyword id="KW-0028">Amino-acid biosynthesis</keyword>
<keyword id="KW-0100">Branched-chain amino acid biosynthesis</keyword>
<keyword id="KW-0408">Iron</keyword>
<keyword id="KW-0411">Iron-sulfur</keyword>
<keyword id="KW-0456">Lyase</keyword>
<keyword id="KW-0460">Magnesium</keyword>
<keyword id="KW-0479">Metal-binding</keyword>
<keyword id="KW-1185">Reference proteome</keyword>
<dbReference type="EC" id="4.2.1.9" evidence="1"/>
<dbReference type="EMBL" id="AE006641">
    <property type="protein sequence ID" value="AAK43209.1"/>
    <property type="molecule type" value="Genomic_DNA"/>
</dbReference>
<dbReference type="PIR" id="B99494">
    <property type="entry name" value="B99494"/>
</dbReference>
<dbReference type="RefSeq" id="WP_009990927.1">
    <property type="nucleotide sequence ID" value="NC_002754.1"/>
</dbReference>
<dbReference type="SMR" id="Q97UB2"/>
<dbReference type="FunCoup" id="Q97UB2">
    <property type="interactions" value="253"/>
</dbReference>
<dbReference type="STRING" id="273057.SSO3107"/>
<dbReference type="PaxDb" id="273057-SSO3107"/>
<dbReference type="EnsemblBacteria" id="AAK43209">
    <property type="protein sequence ID" value="AAK43209"/>
    <property type="gene ID" value="SSO3107"/>
</dbReference>
<dbReference type="GeneID" id="7810155"/>
<dbReference type="KEGG" id="sso:SSO3107"/>
<dbReference type="PATRIC" id="fig|273057.12.peg.3213"/>
<dbReference type="eggNOG" id="arCOG04045">
    <property type="taxonomic scope" value="Archaea"/>
</dbReference>
<dbReference type="HOGENOM" id="CLU_014271_4_2_2"/>
<dbReference type="InParanoid" id="Q97UB2"/>
<dbReference type="PhylomeDB" id="Q97UB2"/>
<dbReference type="BRENDA" id="4.2.1.9">
    <property type="organism ID" value="6163"/>
</dbReference>
<dbReference type="UniPathway" id="UPA00047">
    <property type="reaction ID" value="UER00057"/>
</dbReference>
<dbReference type="UniPathway" id="UPA00049">
    <property type="reaction ID" value="UER00061"/>
</dbReference>
<dbReference type="Proteomes" id="UP000001974">
    <property type="component" value="Chromosome"/>
</dbReference>
<dbReference type="GO" id="GO:0051537">
    <property type="term" value="F:2 iron, 2 sulfur cluster binding"/>
    <property type="evidence" value="ECO:0007669"/>
    <property type="project" value="UniProtKB-UniRule"/>
</dbReference>
<dbReference type="GO" id="GO:0004160">
    <property type="term" value="F:dihydroxy-acid dehydratase activity"/>
    <property type="evidence" value="ECO:0000318"/>
    <property type="project" value="GO_Central"/>
</dbReference>
<dbReference type="GO" id="GO:0000287">
    <property type="term" value="F:magnesium ion binding"/>
    <property type="evidence" value="ECO:0007669"/>
    <property type="project" value="UniProtKB-UniRule"/>
</dbReference>
<dbReference type="GO" id="GO:0009082">
    <property type="term" value="P:branched-chain amino acid biosynthetic process"/>
    <property type="evidence" value="ECO:0000318"/>
    <property type="project" value="GO_Central"/>
</dbReference>
<dbReference type="GO" id="GO:0009097">
    <property type="term" value="P:isoleucine biosynthetic process"/>
    <property type="evidence" value="ECO:0007669"/>
    <property type="project" value="UniProtKB-UniRule"/>
</dbReference>
<dbReference type="GO" id="GO:0009099">
    <property type="term" value="P:L-valine biosynthetic process"/>
    <property type="evidence" value="ECO:0007669"/>
    <property type="project" value="UniProtKB-UniRule"/>
</dbReference>
<dbReference type="FunFam" id="3.50.30.80:FF:000001">
    <property type="entry name" value="Dihydroxy-acid dehydratase"/>
    <property type="match status" value="1"/>
</dbReference>
<dbReference type="Gene3D" id="3.50.30.80">
    <property type="entry name" value="IlvD/EDD C-terminal domain-like"/>
    <property type="match status" value="1"/>
</dbReference>
<dbReference type="HAMAP" id="MF_00012">
    <property type="entry name" value="IlvD"/>
    <property type="match status" value="1"/>
</dbReference>
<dbReference type="InterPro" id="IPR050165">
    <property type="entry name" value="DHAD_IlvD/Edd"/>
</dbReference>
<dbReference type="InterPro" id="IPR042096">
    <property type="entry name" value="Dihydro-acid_dehy_C"/>
</dbReference>
<dbReference type="InterPro" id="IPR004404">
    <property type="entry name" value="DihydroxyA_deHydtase"/>
</dbReference>
<dbReference type="InterPro" id="IPR020558">
    <property type="entry name" value="DiOHA_6PGluconate_deHydtase_CS"/>
</dbReference>
<dbReference type="InterPro" id="IPR056740">
    <property type="entry name" value="ILV_EDD_C"/>
</dbReference>
<dbReference type="InterPro" id="IPR000581">
    <property type="entry name" value="ILV_EDD_N"/>
</dbReference>
<dbReference type="InterPro" id="IPR037237">
    <property type="entry name" value="IlvD/EDD_N"/>
</dbReference>
<dbReference type="NCBIfam" id="TIGR00110">
    <property type="entry name" value="ilvD"/>
    <property type="match status" value="1"/>
</dbReference>
<dbReference type="NCBIfam" id="NF002068">
    <property type="entry name" value="PRK00911.1"/>
    <property type="match status" value="1"/>
</dbReference>
<dbReference type="PANTHER" id="PTHR21000">
    <property type="entry name" value="DIHYDROXY-ACID DEHYDRATASE DAD"/>
    <property type="match status" value="1"/>
</dbReference>
<dbReference type="PANTHER" id="PTHR21000:SF5">
    <property type="entry name" value="DIHYDROXY-ACID DEHYDRATASE, MITOCHONDRIAL"/>
    <property type="match status" value="1"/>
</dbReference>
<dbReference type="Pfam" id="PF24877">
    <property type="entry name" value="ILV_EDD_C"/>
    <property type="match status" value="1"/>
</dbReference>
<dbReference type="Pfam" id="PF00920">
    <property type="entry name" value="ILVD_EDD_N"/>
    <property type="match status" value="1"/>
</dbReference>
<dbReference type="SUPFAM" id="SSF143975">
    <property type="entry name" value="IlvD/EDD N-terminal domain-like"/>
    <property type="match status" value="1"/>
</dbReference>
<dbReference type="SUPFAM" id="SSF52016">
    <property type="entry name" value="LeuD/IlvD-like"/>
    <property type="match status" value="1"/>
</dbReference>
<dbReference type="PROSITE" id="PS00886">
    <property type="entry name" value="ILVD_EDD_1"/>
    <property type="match status" value="1"/>
</dbReference>
<dbReference type="PROSITE" id="PS00887">
    <property type="entry name" value="ILVD_EDD_2"/>
    <property type="match status" value="1"/>
</dbReference>
<evidence type="ECO:0000255" key="1">
    <source>
        <dbReference type="HAMAP-Rule" id="MF_00012"/>
    </source>
</evidence>
<gene>
    <name evidence="1" type="primary">ilvD</name>
    <name type="ordered locus">SSO3107</name>
</gene>
<name>ILVD_SACS2</name>
<feature type="chain" id="PRO_0000103551" description="Dihydroxy-acid dehydratase">
    <location>
        <begin position="1"/>
        <end position="558"/>
    </location>
</feature>
<feature type="active site" description="Proton acceptor" evidence="1">
    <location>
        <position position="472"/>
    </location>
</feature>
<feature type="binding site" evidence="1">
    <location>
        <position position="50"/>
    </location>
    <ligand>
        <name>[2Fe-2S] cluster</name>
        <dbReference type="ChEBI" id="CHEBI:190135"/>
    </ligand>
</feature>
<feature type="binding site" evidence="1">
    <location>
        <position position="82"/>
    </location>
    <ligand>
        <name>Mg(2+)</name>
        <dbReference type="ChEBI" id="CHEBI:18420"/>
    </ligand>
</feature>
<feature type="binding site" evidence="1">
    <location>
        <position position="123"/>
    </location>
    <ligand>
        <name>[2Fe-2S] cluster</name>
        <dbReference type="ChEBI" id="CHEBI:190135"/>
    </ligand>
</feature>
<feature type="binding site" evidence="1">
    <location>
        <position position="124"/>
    </location>
    <ligand>
        <name>Mg(2+)</name>
        <dbReference type="ChEBI" id="CHEBI:18420"/>
    </ligand>
</feature>
<feature type="binding site" description="via carbamate group" evidence="1">
    <location>
        <position position="125"/>
    </location>
    <ligand>
        <name>Mg(2+)</name>
        <dbReference type="ChEBI" id="CHEBI:18420"/>
    </ligand>
</feature>
<feature type="binding site" evidence="1">
    <location>
        <position position="195"/>
    </location>
    <ligand>
        <name>[2Fe-2S] cluster</name>
        <dbReference type="ChEBI" id="CHEBI:190135"/>
    </ligand>
</feature>
<feature type="binding site" evidence="1">
    <location>
        <position position="447"/>
    </location>
    <ligand>
        <name>Mg(2+)</name>
        <dbReference type="ChEBI" id="CHEBI:18420"/>
    </ligand>
</feature>
<feature type="modified residue" description="N6-carboxylysine" evidence="1">
    <location>
        <position position="125"/>
    </location>
</feature>
<sequence>MPAKLNSPSRYHGIYNAPHRAFLRSVGLTDEEIGKPLVAIATAWSEAGPCNFHTLALARVAKEGTKEAGLSPLAFPTMVVNDNIGMGSEGMRYSLVSRDLIADMVEAQFNAHAFDGLVGIGGCDKTTPGILMAMARLNVPSIYIYGGSAEPGYFMGKRLTIEDVHEAIGAYLAKRITENELYEIEKRAHPTLGTCSGLFTANTMGSMSEALGMALPGSASPTATSSRRVMYVKETGKALGSLIENGIKSREILTFEAFENAITTLMAMGGSTNAVLHLLAIAYEAGVKLTLDDFNRISKRTPYIASMKPGGDYVMADLDEVGGVPVVLKKLLDAGLLHGDVLTVTGKTMKQNLEQYKYPNVPHSHIVRDVKNPIKPRGGIVILKGSLAPEGAVIKVAATNVVKFEGKAKVYNSEDDAFKGVQSGEVSEGEVVIIRYEGPKGAPGMPEMLRVTAAIMGAGLNNVALVTDGRFSGATRGPMVGHVAPEAMVGGPIAIVEDGDTIVIDVESERLDLKLSEEEIKNRLKRWSPPSPRYKSGLLAKYASLVSQASMGAVTRPA</sequence>
<organism>
    <name type="scientific">Saccharolobus solfataricus (strain ATCC 35092 / DSM 1617 / JCM 11322 / P2)</name>
    <name type="common">Sulfolobus solfataricus</name>
    <dbReference type="NCBI Taxonomy" id="273057"/>
    <lineage>
        <taxon>Archaea</taxon>
        <taxon>Thermoproteota</taxon>
        <taxon>Thermoprotei</taxon>
        <taxon>Sulfolobales</taxon>
        <taxon>Sulfolobaceae</taxon>
        <taxon>Saccharolobus</taxon>
    </lineage>
</organism>
<comment type="function">
    <text evidence="1">Functions in the biosynthesis of branched-chain amino acids. Catalyzes the dehydration of (2R,3R)-2,3-dihydroxy-3-methylpentanoate (2,3-dihydroxy-3-methylvalerate) into 2-oxo-3-methylpentanoate (2-oxo-3-methylvalerate) and of (2R)-2,3-dihydroxy-3-methylbutanoate (2,3-dihydroxyisovalerate) into 2-oxo-3-methylbutanoate (2-oxoisovalerate), the penultimate precursor to L-isoleucine and L-valine, respectively.</text>
</comment>
<comment type="catalytic activity">
    <reaction evidence="1">
        <text>(2R)-2,3-dihydroxy-3-methylbutanoate = 3-methyl-2-oxobutanoate + H2O</text>
        <dbReference type="Rhea" id="RHEA:24809"/>
        <dbReference type="ChEBI" id="CHEBI:11851"/>
        <dbReference type="ChEBI" id="CHEBI:15377"/>
        <dbReference type="ChEBI" id="CHEBI:49072"/>
        <dbReference type="EC" id="4.2.1.9"/>
    </reaction>
    <physiologicalReaction direction="left-to-right" evidence="1">
        <dbReference type="Rhea" id="RHEA:24810"/>
    </physiologicalReaction>
</comment>
<comment type="catalytic activity">
    <reaction evidence="1">
        <text>(2R,3R)-2,3-dihydroxy-3-methylpentanoate = (S)-3-methyl-2-oxopentanoate + H2O</text>
        <dbReference type="Rhea" id="RHEA:27694"/>
        <dbReference type="ChEBI" id="CHEBI:15377"/>
        <dbReference type="ChEBI" id="CHEBI:35146"/>
        <dbReference type="ChEBI" id="CHEBI:49258"/>
        <dbReference type="EC" id="4.2.1.9"/>
    </reaction>
    <physiologicalReaction direction="left-to-right" evidence="1">
        <dbReference type="Rhea" id="RHEA:27695"/>
    </physiologicalReaction>
</comment>
<comment type="cofactor">
    <cofactor evidence="1">
        <name>[2Fe-2S] cluster</name>
        <dbReference type="ChEBI" id="CHEBI:190135"/>
    </cofactor>
    <text evidence="1">Binds 1 [2Fe-2S] cluster per subunit. This cluster acts as a Lewis acid cofactor.</text>
</comment>
<comment type="cofactor">
    <cofactor evidence="1">
        <name>Mg(2+)</name>
        <dbReference type="ChEBI" id="CHEBI:18420"/>
    </cofactor>
</comment>
<comment type="pathway">
    <text evidence="1">Amino-acid biosynthesis; L-isoleucine biosynthesis; L-isoleucine from 2-oxobutanoate: step 3/4.</text>
</comment>
<comment type="pathway">
    <text evidence="1">Amino-acid biosynthesis; L-valine biosynthesis; L-valine from pyruvate: step 3/4.</text>
</comment>
<comment type="subunit">
    <text evidence="1">Homodimer.</text>
</comment>
<comment type="similarity">
    <text evidence="1">Belongs to the IlvD/Edd family.</text>
</comment>
<reference key="1">
    <citation type="journal article" date="2001" name="Proc. Natl. Acad. Sci. U.S.A.">
        <title>The complete genome of the crenarchaeon Sulfolobus solfataricus P2.</title>
        <authorList>
            <person name="She Q."/>
            <person name="Singh R.K."/>
            <person name="Confalonieri F."/>
            <person name="Zivanovic Y."/>
            <person name="Allard G."/>
            <person name="Awayez M.J."/>
            <person name="Chan-Weiher C.C.-Y."/>
            <person name="Clausen I.G."/>
            <person name="Curtis B.A."/>
            <person name="De Moors A."/>
            <person name="Erauso G."/>
            <person name="Fletcher C."/>
            <person name="Gordon P.M.K."/>
            <person name="Heikamp-de Jong I."/>
            <person name="Jeffries A.C."/>
            <person name="Kozera C.J."/>
            <person name="Medina N."/>
            <person name="Peng X."/>
            <person name="Thi-Ngoc H.P."/>
            <person name="Redder P."/>
            <person name="Schenk M.E."/>
            <person name="Theriault C."/>
            <person name="Tolstrup N."/>
            <person name="Charlebois R.L."/>
            <person name="Doolittle W.F."/>
            <person name="Duguet M."/>
            <person name="Gaasterland T."/>
            <person name="Garrett R.A."/>
            <person name="Ragan M.A."/>
            <person name="Sensen C.W."/>
            <person name="Van der Oost J."/>
        </authorList>
    </citation>
    <scope>NUCLEOTIDE SEQUENCE [LARGE SCALE GENOMIC DNA]</scope>
    <source>
        <strain>ATCC 35092 / DSM 1617 / JCM 11322 / P2</strain>
    </source>
</reference>
<proteinExistence type="inferred from homology"/>
<accession>Q97UB2</accession>